<proteinExistence type="inferred from homology"/>
<evidence type="ECO:0000255" key="1">
    <source>
        <dbReference type="HAMAP-Rule" id="MF_01658"/>
    </source>
</evidence>
<organism>
    <name type="scientific">Polynucleobacter necessarius subsp. necessarius (strain STIR1)</name>
    <dbReference type="NCBI Taxonomy" id="452638"/>
    <lineage>
        <taxon>Bacteria</taxon>
        <taxon>Pseudomonadati</taxon>
        <taxon>Pseudomonadota</taxon>
        <taxon>Betaproteobacteria</taxon>
        <taxon>Burkholderiales</taxon>
        <taxon>Burkholderiaceae</taxon>
        <taxon>Polynucleobacter</taxon>
    </lineage>
</organism>
<reference key="1">
    <citation type="journal article" date="2013" name="Proc. Natl. Acad. Sci. U.S.A.">
        <title>Polynucleobacter necessarius, a model for genome reduction in both free-living and symbiotic bacteria.</title>
        <authorList>
            <person name="Boscaro V."/>
            <person name="Felletti M."/>
            <person name="Vannini C."/>
            <person name="Ackerman M.S."/>
            <person name="Chain P.S."/>
            <person name="Malfatti S."/>
            <person name="Vergez L.M."/>
            <person name="Shin M."/>
            <person name="Doak T.G."/>
            <person name="Lynch M."/>
            <person name="Petroni G."/>
        </authorList>
    </citation>
    <scope>NUCLEOTIDE SEQUENCE [LARGE SCALE GENOMIC DNA]</scope>
    <source>
        <strain>STIR1</strain>
    </source>
</reference>
<accession>B1XT00</accession>
<gene>
    <name evidence="1" type="primary">coq7</name>
    <name type="ordered locus">Pnec_0171</name>
</gene>
<protein>
    <recommendedName>
        <fullName evidence="1">3-demethoxyubiquinol 3-hydroxylase</fullName>
        <shortName evidence="1">DMQ hydroxylase</shortName>
        <ecNumber evidence="1">1.14.99.60</ecNumber>
    </recommendedName>
    <alternativeName>
        <fullName evidence="1">2-nonaprenyl-3-methyl-6-methoxy-1,4-benzoquinol hydroxylase</fullName>
    </alternativeName>
</protein>
<comment type="function">
    <text evidence="1">Catalyzes the hydroxylation of 2-nonaprenyl-3-methyl-6-methoxy-1,4-benzoquinol during ubiquinone biosynthesis.</text>
</comment>
<comment type="catalytic activity">
    <reaction evidence="1">
        <text>a 5-methoxy-2-methyl-3-(all-trans-polyprenyl)benzene-1,4-diol + AH2 + O2 = a 3-demethylubiquinol + A + H2O</text>
        <dbReference type="Rhea" id="RHEA:50908"/>
        <dbReference type="Rhea" id="RHEA-COMP:10859"/>
        <dbReference type="Rhea" id="RHEA-COMP:10914"/>
        <dbReference type="ChEBI" id="CHEBI:13193"/>
        <dbReference type="ChEBI" id="CHEBI:15377"/>
        <dbReference type="ChEBI" id="CHEBI:15379"/>
        <dbReference type="ChEBI" id="CHEBI:17499"/>
        <dbReference type="ChEBI" id="CHEBI:84167"/>
        <dbReference type="ChEBI" id="CHEBI:84422"/>
        <dbReference type="EC" id="1.14.99.60"/>
    </reaction>
</comment>
<comment type="cofactor">
    <cofactor evidence="1">
        <name>Fe cation</name>
        <dbReference type="ChEBI" id="CHEBI:24875"/>
    </cofactor>
    <text evidence="1">Binds 2 iron ions per subunit.</text>
</comment>
<comment type="pathway">
    <text evidence="1">Cofactor biosynthesis; ubiquinone biosynthesis.</text>
</comment>
<comment type="subcellular location">
    <subcellularLocation>
        <location evidence="1">Cell membrane</location>
        <topology evidence="1">Peripheral membrane protein</topology>
    </subcellularLocation>
</comment>
<comment type="similarity">
    <text evidence="1">Belongs to the COQ7 family.</text>
</comment>
<sequence>MSPIDRLILEFDTALRSVVGGANAQRPTPGSEFASNSGVDAAERKHAAGLMRVNHVGEVCAQALYQSQKLVARNSEIQAMLDYSGQEEMDHLAWCENRLQELGSHTSYLNPLWYAGSFAIGLAAGLAGDKWSLGFVAETEKQVESHLESHLKKLPKEDQRSRAIVDQMRIDEIAHGQAAKNAGGVNLPEPIQKIMHAMSKVMTTTAYKI</sequence>
<keyword id="KW-1003">Cell membrane</keyword>
<keyword id="KW-0408">Iron</keyword>
<keyword id="KW-0472">Membrane</keyword>
<keyword id="KW-0479">Metal-binding</keyword>
<keyword id="KW-0503">Monooxygenase</keyword>
<keyword id="KW-0560">Oxidoreductase</keyword>
<keyword id="KW-0831">Ubiquinone biosynthesis</keyword>
<name>COQ7_POLNS</name>
<dbReference type="EC" id="1.14.99.60" evidence="1"/>
<dbReference type="EMBL" id="CP001010">
    <property type="protein sequence ID" value="ACB43477.1"/>
    <property type="molecule type" value="Genomic_DNA"/>
</dbReference>
<dbReference type="SMR" id="B1XT00"/>
<dbReference type="STRING" id="452638.Pnec_0171"/>
<dbReference type="KEGG" id="pne:Pnec_0171"/>
<dbReference type="eggNOG" id="COG2941">
    <property type="taxonomic scope" value="Bacteria"/>
</dbReference>
<dbReference type="HOGENOM" id="CLU_088601_0_0_4"/>
<dbReference type="OrthoDB" id="5192789at2"/>
<dbReference type="UniPathway" id="UPA00232"/>
<dbReference type="GO" id="GO:0005886">
    <property type="term" value="C:plasma membrane"/>
    <property type="evidence" value="ECO:0007669"/>
    <property type="project" value="UniProtKB-SubCell"/>
</dbReference>
<dbReference type="GO" id="GO:0008682">
    <property type="term" value="F:3-demethoxyubiquinol 3-hydroxylase activity"/>
    <property type="evidence" value="ECO:0007669"/>
    <property type="project" value="UniProtKB-EC"/>
</dbReference>
<dbReference type="GO" id="GO:0046872">
    <property type="term" value="F:metal ion binding"/>
    <property type="evidence" value="ECO:0007669"/>
    <property type="project" value="UniProtKB-KW"/>
</dbReference>
<dbReference type="GO" id="GO:0006744">
    <property type="term" value="P:ubiquinone biosynthetic process"/>
    <property type="evidence" value="ECO:0007669"/>
    <property type="project" value="UniProtKB-UniRule"/>
</dbReference>
<dbReference type="CDD" id="cd01042">
    <property type="entry name" value="DMQH"/>
    <property type="match status" value="1"/>
</dbReference>
<dbReference type="Gene3D" id="1.20.1260.10">
    <property type="match status" value="1"/>
</dbReference>
<dbReference type="HAMAP" id="MF_01658">
    <property type="entry name" value="COQ7"/>
    <property type="match status" value="1"/>
</dbReference>
<dbReference type="InterPro" id="IPR047809">
    <property type="entry name" value="COQ7_proteobact"/>
</dbReference>
<dbReference type="InterPro" id="IPR012347">
    <property type="entry name" value="Ferritin-like"/>
</dbReference>
<dbReference type="InterPro" id="IPR009078">
    <property type="entry name" value="Ferritin-like_SF"/>
</dbReference>
<dbReference type="InterPro" id="IPR011566">
    <property type="entry name" value="Ubq_synth_Coq7"/>
</dbReference>
<dbReference type="NCBIfam" id="NF033656">
    <property type="entry name" value="DMQ_monoox_COQ7"/>
    <property type="match status" value="1"/>
</dbReference>
<dbReference type="PANTHER" id="PTHR11237:SF4">
    <property type="entry name" value="5-DEMETHOXYUBIQUINONE HYDROXYLASE, MITOCHONDRIAL"/>
    <property type="match status" value="1"/>
</dbReference>
<dbReference type="PANTHER" id="PTHR11237">
    <property type="entry name" value="COENZYME Q10 BIOSYNTHESIS PROTEIN 7"/>
    <property type="match status" value="1"/>
</dbReference>
<dbReference type="Pfam" id="PF03232">
    <property type="entry name" value="COQ7"/>
    <property type="match status" value="1"/>
</dbReference>
<dbReference type="SUPFAM" id="SSF47240">
    <property type="entry name" value="Ferritin-like"/>
    <property type="match status" value="1"/>
</dbReference>
<feature type="chain" id="PRO_1000187054" description="3-demethoxyubiquinol 3-hydroxylase">
    <location>
        <begin position="1"/>
        <end position="209"/>
    </location>
</feature>
<feature type="binding site" evidence="1">
    <location>
        <position position="58"/>
    </location>
    <ligand>
        <name>Fe cation</name>
        <dbReference type="ChEBI" id="CHEBI:24875"/>
        <label>1</label>
    </ligand>
</feature>
<feature type="binding site" evidence="1">
    <location>
        <position position="88"/>
    </location>
    <ligand>
        <name>Fe cation</name>
        <dbReference type="ChEBI" id="CHEBI:24875"/>
        <label>1</label>
    </ligand>
</feature>
<feature type="binding site" evidence="1">
    <location>
        <position position="88"/>
    </location>
    <ligand>
        <name>Fe cation</name>
        <dbReference type="ChEBI" id="CHEBI:24875"/>
        <label>2</label>
    </ligand>
</feature>
<feature type="binding site" evidence="1">
    <location>
        <position position="91"/>
    </location>
    <ligand>
        <name>Fe cation</name>
        <dbReference type="ChEBI" id="CHEBI:24875"/>
        <label>1</label>
    </ligand>
</feature>
<feature type="binding site" evidence="1">
    <location>
        <position position="140"/>
    </location>
    <ligand>
        <name>Fe cation</name>
        <dbReference type="ChEBI" id="CHEBI:24875"/>
        <label>2</label>
    </ligand>
</feature>
<feature type="binding site" evidence="1">
    <location>
        <position position="172"/>
    </location>
    <ligand>
        <name>Fe cation</name>
        <dbReference type="ChEBI" id="CHEBI:24875"/>
        <label>1</label>
    </ligand>
</feature>
<feature type="binding site" evidence="1">
    <location>
        <position position="172"/>
    </location>
    <ligand>
        <name>Fe cation</name>
        <dbReference type="ChEBI" id="CHEBI:24875"/>
        <label>2</label>
    </ligand>
</feature>
<feature type="binding site" evidence="1">
    <location>
        <position position="175"/>
    </location>
    <ligand>
        <name>Fe cation</name>
        <dbReference type="ChEBI" id="CHEBI:24875"/>
        <label>2</label>
    </ligand>
</feature>